<sequence length="291" mass="33108">MTSSYLHFPEFDPVIFSIGPVALHWYGLMYLVGFIFAMWLATRRANRPGSGWTKNEVENLLYAGFLGVFLGGRIGYVLFYNFPQFMADPLYLFRVWDGGMSFHGGLIGVIVVMIIFARRTKRSFFQVSDFIAPLIPFGLGAGRLGNFINGELWGRVDPNFPFAMLFPGSRTEDILLLQTNPQWQSIFDTYGVLPRHPSQLYELLLEGVVLFIILNLYIRKPRPMGAVSGLFLIGYGAFRIIVEFFRQPDAQFTGAWVQYISMGQILSIPMIVAGVIMMVWAYRRSPQQHVS</sequence>
<name>LGT_ECO5E</name>
<accession>B5Z4E5</accession>
<feature type="chain" id="PRO_1000137421" description="Phosphatidylglycerol--prolipoprotein diacylglyceryl transferase">
    <location>
        <begin position="1"/>
        <end position="291"/>
    </location>
</feature>
<feature type="transmembrane region" description="Helical" evidence="1">
    <location>
        <begin position="21"/>
        <end position="41"/>
    </location>
</feature>
<feature type="transmembrane region" description="Helical" evidence="1">
    <location>
        <begin position="60"/>
        <end position="80"/>
    </location>
</feature>
<feature type="transmembrane region" description="Helical" evidence="1">
    <location>
        <begin position="96"/>
        <end position="116"/>
    </location>
</feature>
<feature type="transmembrane region" description="Helical" evidence="1">
    <location>
        <begin position="225"/>
        <end position="245"/>
    </location>
</feature>
<feature type="transmembrane region" description="Helical" evidence="1">
    <location>
        <begin position="260"/>
        <end position="280"/>
    </location>
</feature>
<feature type="binding site" evidence="1">
    <location>
        <position position="143"/>
    </location>
    <ligand>
        <name>a 1,2-diacyl-sn-glycero-3-phospho-(1'-sn-glycerol)</name>
        <dbReference type="ChEBI" id="CHEBI:64716"/>
    </ligand>
</feature>
<dbReference type="EC" id="2.5.1.145" evidence="1"/>
<dbReference type="EMBL" id="CP001164">
    <property type="protein sequence ID" value="ACI37604.1"/>
    <property type="molecule type" value="Genomic_DNA"/>
</dbReference>
<dbReference type="RefSeq" id="WP_000204658.1">
    <property type="nucleotide sequence ID" value="NC_011353.1"/>
</dbReference>
<dbReference type="SMR" id="B5Z4E5"/>
<dbReference type="GeneID" id="93779170"/>
<dbReference type="KEGG" id="ecf:ECH74115_4094"/>
<dbReference type="HOGENOM" id="CLU_013386_1_0_6"/>
<dbReference type="UniPathway" id="UPA00664"/>
<dbReference type="GO" id="GO:0005886">
    <property type="term" value="C:plasma membrane"/>
    <property type="evidence" value="ECO:0007669"/>
    <property type="project" value="UniProtKB-SubCell"/>
</dbReference>
<dbReference type="GO" id="GO:0008961">
    <property type="term" value="F:phosphatidylglycerol-prolipoprotein diacylglyceryl transferase activity"/>
    <property type="evidence" value="ECO:0007669"/>
    <property type="project" value="UniProtKB-UniRule"/>
</dbReference>
<dbReference type="GO" id="GO:0042158">
    <property type="term" value="P:lipoprotein biosynthetic process"/>
    <property type="evidence" value="ECO:0007669"/>
    <property type="project" value="UniProtKB-UniRule"/>
</dbReference>
<dbReference type="HAMAP" id="MF_01147">
    <property type="entry name" value="Lgt"/>
    <property type="match status" value="1"/>
</dbReference>
<dbReference type="InterPro" id="IPR001640">
    <property type="entry name" value="Lgt"/>
</dbReference>
<dbReference type="NCBIfam" id="TIGR00544">
    <property type="entry name" value="lgt"/>
    <property type="match status" value="1"/>
</dbReference>
<dbReference type="PANTHER" id="PTHR30589:SF0">
    <property type="entry name" value="PHOSPHATIDYLGLYCEROL--PROLIPOPROTEIN DIACYLGLYCERYL TRANSFERASE"/>
    <property type="match status" value="1"/>
</dbReference>
<dbReference type="PANTHER" id="PTHR30589">
    <property type="entry name" value="PROLIPOPROTEIN DIACYLGLYCERYL TRANSFERASE"/>
    <property type="match status" value="1"/>
</dbReference>
<dbReference type="Pfam" id="PF01790">
    <property type="entry name" value="LGT"/>
    <property type="match status" value="1"/>
</dbReference>
<dbReference type="PROSITE" id="PS01311">
    <property type="entry name" value="LGT"/>
    <property type="match status" value="1"/>
</dbReference>
<evidence type="ECO:0000255" key="1">
    <source>
        <dbReference type="HAMAP-Rule" id="MF_01147"/>
    </source>
</evidence>
<organism>
    <name type="scientific">Escherichia coli O157:H7 (strain EC4115 / EHEC)</name>
    <dbReference type="NCBI Taxonomy" id="444450"/>
    <lineage>
        <taxon>Bacteria</taxon>
        <taxon>Pseudomonadati</taxon>
        <taxon>Pseudomonadota</taxon>
        <taxon>Gammaproteobacteria</taxon>
        <taxon>Enterobacterales</taxon>
        <taxon>Enterobacteriaceae</taxon>
        <taxon>Escherichia</taxon>
    </lineage>
</organism>
<reference key="1">
    <citation type="journal article" date="2011" name="Proc. Natl. Acad. Sci. U.S.A.">
        <title>Genomic anatomy of Escherichia coli O157:H7 outbreaks.</title>
        <authorList>
            <person name="Eppinger M."/>
            <person name="Mammel M.K."/>
            <person name="Leclerc J.E."/>
            <person name="Ravel J."/>
            <person name="Cebula T.A."/>
        </authorList>
    </citation>
    <scope>NUCLEOTIDE SEQUENCE [LARGE SCALE GENOMIC DNA]</scope>
    <source>
        <strain>EC4115 / EHEC</strain>
    </source>
</reference>
<proteinExistence type="inferred from homology"/>
<protein>
    <recommendedName>
        <fullName evidence="1">Phosphatidylglycerol--prolipoprotein diacylglyceryl transferase</fullName>
        <ecNumber evidence="1">2.5.1.145</ecNumber>
    </recommendedName>
</protein>
<gene>
    <name evidence="1" type="primary">lgt</name>
    <name type="ordered locus">ECH74115_4094</name>
</gene>
<comment type="function">
    <text evidence="1">Catalyzes the transfer of the diacylglyceryl group from phosphatidylglycerol to the sulfhydryl group of the N-terminal cysteine of a prolipoprotein, the first step in the formation of mature lipoproteins.</text>
</comment>
<comment type="catalytic activity">
    <reaction evidence="1">
        <text>L-cysteinyl-[prolipoprotein] + a 1,2-diacyl-sn-glycero-3-phospho-(1'-sn-glycerol) = an S-1,2-diacyl-sn-glyceryl-L-cysteinyl-[prolipoprotein] + sn-glycerol 1-phosphate + H(+)</text>
        <dbReference type="Rhea" id="RHEA:56712"/>
        <dbReference type="Rhea" id="RHEA-COMP:14679"/>
        <dbReference type="Rhea" id="RHEA-COMP:14680"/>
        <dbReference type="ChEBI" id="CHEBI:15378"/>
        <dbReference type="ChEBI" id="CHEBI:29950"/>
        <dbReference type="ChEBI" id="CHEBI:57685"/>
        <dbReference type="ChEBI" id="CHEBI:64716"/>
        <dbReference type="ChEBI" id="CHEBI:140658"/>
        <dbReference type="EC" id="2.5.1.145"/>
    </reaction>
</comment>
<comment type="pathway">
    <text evidence="1">Protein modification; lipoprotein biosynthesis (diacylglyceryl transfer).</text>
</comment>
<comment type="subcellular location">
    <subcellularLocation>
        <location evidence="1">Cell inner membrane</location>
        <topology evidence="1">Multi-pass membrane protein</topology>
    </subcellularLocation>
</comment>
<comment type="similarity">
    <text evidence="1">Belongs to the Lgt family.</text>
</comment>
<keyword id="KW-0997">Cell inner membrane</keyword>
<keyword id="KW-1003">Cell membrane</keyword>
<keyword id="KW-0472">Membrane</keyword>
<keyword id="KW-0808">Transferase</keyword>
<keyword id="KW-0812">Transmembrane</keyword>
<keyword id="KW-1133">Transmembrane helix</keyword>